<sequence>MKKLTTLLLASTLLIAACGNDDSKKDDSKTSKKDDGVKAELKQATKAYDKYTDEQLNEFLKGTEKFVKAIENNDMAQAKALYPKVRMYYERSEPVAEAFGDLDPKIDARLADMKEEKKEKEWSGYHKIEKALYEDKKIDDVTKKDAQQLLKDAKELHAKADTLDITPKLMLQGSVDLLNEVATSKITGEEEIYSHTDLYDFKANVEGAQKIYDLFKPILEKKDKKLSDDIQMNFDKVNQLLDKYKDNNGGYESFEKVSKKDRKAFADAVNALGEPLSKMAVITE</sequence>
<proteinExistence type="inferred from homology"/>
<feature type="signal peptide" evidence="1">
    <location>
        <begin position="1"/>
        <end position="17"/>
    </location>
</feature>
<feature type="chain" id="PRO_0000278313" description="Efem/EfeO family lipoprotein">
    <location>
        <begin position="18"/>
        <end position="284"/>
    </location>
</feature>
<feature type="lipid moiety-binding region" description="N-palmitoyl cysteine" evidence="1">
    <location>
        <position position="18"/>
    </location>
</feature>
<feature type="lipid moiety-binding region" description="S-diacylglycerol cysteine" evidence="1">
    <location>
        <position position="18"/>
    </location>
</feature>
<accession>Q99WN4</accession>
<protein>
    <recommendedName>
        <fullName>Efem/EfeO family lipoprotein</fullName>
    </recommendedName>
</protein>
<dbReference type="EMBL" id="BA000017">
    <property type="protein sequence ID" value="BAB56505.1"/>
    <property type="molecule type" value="Genomic_DNA"/>
</dbReference>
<dbReference type="SMR" id="Q99WN4"/>
<dbReference type="DNASU" id="1120300"/>
<dbReference type="KEGG" id="sav:SAV0343"/>
<dbReference type="HOGENOM" id="CLU_050342_0_1_9"/>
<dbReference type="PhylomeDB" id="Q99WN4"/>
<dbReference type="Proteomes" id="UP000002481">
    <property type="component" value="Chromosome"/>
</dbReference>
<dbReference type="GO" id="GO:0005886">
    <property type="term" value="C:plasma membrane"/>
    <property type="evidence" value="ECO:0007669"/>
    <property type="project" value="UniProtKB-SubCell"/>
</dbReference>
<dbReference type="CDD" id="cd14656">
    <property type="entry name" value="Imelysin-like_EfeO"/>
    <property type="match status" value="1"/>
</dbReference>
<dbReference type="Gene3D" id="1.20.1420.20">
    <property type="entry name" value="M75 peptidase, HXXE motif"/>
    <property type="match status" value="1"/>
</dbReference>
<dbReference type="InterPro" id="IPR050894">
    <property type="entry name" value="EfeM/EfeO_iron_uptake"/>
</dbReference>
<dbReference type="InterPro" id="IPR018976">
    <property type="entry name" value="Imelysin-like"/>
</dbReference>
<dbReference type="InterPro" id="IPR034981">
    <property type="entry name" value="Imelysin-like_EfeO/Algp7"/>
</dbReference>
<dbReference type="InterPro" id="IPR038352">
    <property type="entry name" value="Imelysin_sf"/>
</dbReference>
<dbReference type="InterPro" id="IPR053377">
    <property type="entry name" value="Iron_uptake_EfeM/EfeO"/>
</dbReference>
<dbReference type="NCBIfam" id="NF041757">
    <property type="entry name" value="EfeO"/>
    <property type="match status" value="1"/>
</dbReference>
<dbReference type="PANTHER" id="PTHR39192">
    <property type="entry name" value="IRON UPTAKE SYSTEM COMPONENT EFEO"/>
    <property type="match status" value="1"/>
</dbReference>
<dbReference type="PANTHER" id="PTHR39192:SF1">
    <property type="entry name" value="IRON UPTAKE SYSTEM COMPONENT EFEO"/>
    <property type="match status" value="1"/>
</dbReference>
<dbReference type="Pfam" id="PF09375">
    <property type="entry name" value="Peptidase_M75"/>
    <property type="match status" value="1"/>
</dbReference>
<dbReference type="PROSITE" id="PS51257">
    <property type="entry name" value="PROKAR_LIPOPROTEIN"/>
    <property type="match status" value="1"/>
</dbReference>
<gene>
    <name type="ordered locus">SAV0343</name>
</gene>
<comment type="subcellular location">
    <subcellularLocation>
        <location evidence="1">Cell membrane</location>
        <topology evidence="1">Lipid-anchor</topology>
    </subcellularLocation>
</comment>
<comment type="similarity">
    <text evidence="2">Belongs to the EfeM/EfeO family.</text>
</comment>
<keyword id="KW-1003">Cell membrane</keyword>
<keyword id="KW-0449">Lipoprotein</keyword>
<keyword id="KW-0472">Membrane</keyword>
<keyword id="KW-0564">Palmitate</keyword>
<keyword id="KW-0732">Signal</keyword>
<reference key="1">
    <citation type="journal article" date="2001" name="Lancet">
        <title>Whole genome sequencing of meticillin-resistant Staphylococcus aureus.</title>
        <authorList>
            <person name="Kuroda M."/>
            <person name="Ohta T."/>
            <person name="Uchiyama I."/>
            <person name="Baba T."/>
            <person name="Yuzawa H."/>
            <person name="Kobayashi I."/>
            <person name="Cui L."/>
            <person name="Oguchi A."/>
            <person name="Aoki K."/>
            <person name="Nagai Y."/>
            <person name="Lian J.-Q."/>
            <person name="Ito T."/>
            <person name="Kanamori M."/>
            <person name="Matsumaru H."/>
            <person name="Maruyama A."/>
            <person name="Murakami H."/>
            <person name="Hosoyama A."/>
            <person name="Mizutani-Ui Y."/>
            <person name="Takahashi N.K."/>
            <person name="Sawano T."/>
            <person name="Inoue R."/>
            <person name="Kaito C."/>
            <person name="Sekimizu K."/>
            <person name="Hirakawa H."/>
            <person name="Kuhara S."/>
            <person name="Goto S."/>
            <person name="Yabuzaki J."/>
            <person name="Kanehisa M."/>
            <person name="Yamashita A."/>
            <person name="Oshima K."/>
            <person name="Furuya K."/>
            <person name="Yoshino C."/>
            <person name="Shiba T."/>
            <person name="Hattori M."/>
            <person name="Ogasawara N."/>
            <person name="Hayashi H."/>
            <person name="Hiramatsu K."/>
        </authorList>
    </citation>
    <scope>NUCLEOTIDE SEQUENCE [LARGE SCALE GENOMIC DNA]</scope>
    <source>
        <strain>Mu50 / ATCC 700699</strain>
    </source>
</reference>
<organism>
    <name type="scientific">Staphylococcus aureus (strain Mu50 / ATCC 700699)</name>
    <dbReference type="NCBI Taxonomy" id="158878"/>
    <lineage>
        <taxon>Bacteria</taxon>
        <taxon>Bacillati</taxon>
        <taxon>Bacillota</taxon>
        <taxon>Bacilli</taxon>
        <taxon>Bacillales</taxon>
        <taxon>Staphylococcaceae</taxon>
        <taxon>Staphylococcus</taxon>
    </lineage>
</organism>
<name>EFEMO_STAAM</name>
<evidence type="ECO:0000255" key="1">
    <source>
        <dbReference type="PROSITE-ProRule" id="PRU00303"/>
    </source>
</evidence>
<evidence type="ECO:0000305" key="2"/>